<accession>Q86VE3</accession>
<accession>A0A2R8Y5C1</accession>
<accession>A0AVK7</accession>
<accession>E9PB72</accession>
<accession>Q5H8V9</accession>
<evidence type="ECO:0000250" key="1"/>
<evidence type="ECO:0000255" key="2">
    <source>
        <dbReference type="PROSITE-ProRule" id="PRU00532"/>
    </source>
</evidence>
<evidence type="ECO:0000256" key="3">
    <source>
        <dbReference type="SAM" id="MobiDB-lite"/>
    </source>
</evidence>
<evidence type="ECO:0000269" key="4">
    <source>
    </source>
</evidence>
<evidence type="ECO:0000303" key="5">
    <source>
    </source>
</evidence>
<evidence type="ECO:0000305" key="6"/>
<proteinExistence type="evidence at protein level"/>
<name>SATL1_HUMAN</name>
<feature type="chain" id="PRO_0000282928" description="Spermidine/spermine N(1)-acetyltransferase-like protein 1">
    <location>
        <begin position="1"/>
        <end position="695"/>
    </location>
</feature>
<feature type="domain" description="N-acetyltransferase" evidence="2">
    <location>
        <begin position="529"/>
        <end position="695"/>
    </location>
</feature>
<feature type="region of interest" description="Disordered" evidence="3">
    <location>
        <begin position="1"/>
        <end position="274"/>
    </location>
</feature>
<feature type="region of interest" description="Disordered" evidence="3">
    <location>
        <begin position="290"/>
        <end position="332"/>
    </location>
</feature>
<feature type="region of interest" description="Disordered" evidence="3">
    <location>
        <begin position="344"/>
        <end position="375"/>
    </location>
</feature>
<feature type="region of interest" description="Disordered" evidence="3">
    <location>
        <begin position="387"/>
        <end position="493"/>
    </location>
</feature>
<feature type="compositionally biased region" description="Polar residues" evidence="3">
    <location>
        <begin position="1"/>
        <end position="39"/>
    </location>
</feature>
<feature type="compositionally biased region" description="Polar residues" evidence="3">
    <location>
        <begin position="52"/>
        <end position="68"/>
    </location>
</feature>
<feature type="compositionally biased region" description="Polar residues" evidence="3">
    <location>
        <begin position="78"/>
        <end position="98"/>
    </location>
</feature>
<feature type="compositionally biased region" description="Low complexity" evidence="3">
    <location>
        <begin position="105"/>
        <end position="122"/>
    </location>
</feature>
<feature type="compositionally biased region" description="Polar residues" evidence="3">
    <location>
        <begin position="123"/>
        <end position="179"/>
    </location>
</feature>
<feature type="compositionally biased region" description="Polar residues" evidence="3">
    <location>
        <begin position="197"/>
        <end position="208"/>
    </location>
</feature>
<feature type="compositionally biased region" description="Polar residues" evidence="3">
    <location>
        <begin position="231"/>
        <end position="266"/>
    </location>
</feature>
<feature type="compositionally biased region" description="Polar residues" evidence="3">
    <location>
        <begin position="294"/>
        <end position="310"/>
    </location>
</feature>
<feature type="compositionally biased region" description="Polar residues" evidence="3">
    <location>
        <begin position="355"/>
        <end position="375"/>
    </location>
</feature>
<feature type="compositionally biased region" description="Polar residues" evidence="3">
    <location>
        <begin position="389"/>
        <end position="422"/>
    </location>
</feature>
<feature type="compositionally biased region" description="Polar residues" evidence="3">
    <location>
        <begin position="459"/>
        <end position="471"/>
    </location>
</feature>
<feature type="binding site" evidence="1">
    <location>
        <begin position="552"/>
        <end position="553"/>
    </location>
    <ligand>
        <name>substrate</name>
    </ligand>
</feature>
<feature type="binding site" evidence="1">
    <location>
        <begin position="618"/>
        <end position="620"/>
    </location>
    <ligand>
        <name>acetyl-CoA</name>
        <dbReference type="ChEBI" id="CHEBI:57288"/>
    </ligand>
</feature>
<feature type="binding site" evidence="1">
    <location>
        <begin position="626"/>
        <end position="631"/>
    </location>
    <ligand>
        <name>acetyl-CoA</name>
        <dbReference type="ChEBI" id="CHEBI:57288"/>
    </ligand>
</feature>
<feature type="binding site" evidence="1">
    <location>
        <begin position="650"/>
        <end position="652"/>
    </location>
    <ligand>
        <name>substrate</name>
    </ligand>
</feature>
<feature type="binding site" evidence="1">
    <location>
        <position position="676"/>
    </location>
    <ligand>
        <name>substrate</name>
    </ligand>
</feature>
<feature type="splice variant" id="VSP_024253" description="In isoform 2." evidence="5">
    <original>GLGIGAE</original>
    <variation>DSHHNSM</variation>
    <location>
        <begin position="626"/>
        <end position="632"/>
    </location>
</feature>
<feature type="splice variant" id="VSP_024254" description="In isoform 2." evidence="5">
    <location>
        <begin position="633"/>
        <end position="695"/>
    </location>
</feature>
<feature type="sequence variant" id="VAR_031438" description="In dbSNP:rs10126146." evidence="4">
    <original>W</original>
    <variation>R</variation>
    <location>
        <position position="279"/>
    </location>
</feature>
<feature type="sequence conflict" description="In Ref. 1; AAH43215." evidence="6" ref="1">
    <original>T</original>
    <variation>S</variation>
    <location>
        <position position="176"/>
    </location>
</feature>
<feature type="sequence conflict" description="In Ref. 1; AAH43215." evidence="6" ref="1">
    <original>S</original>
    <variation>G</variation>
    <location>
        <position position="179"/>
    </location>
</feature>
<feature type="sequence conflict" description="In Ref. 2; AAI26402." evidence="6" ref="2">
    <original>P</original>
    <variation>L</variation>
    <location>
        <position position="426"/>
    </location>
</feature>
<gene>
    <name type="primary">SATL1</name>
</gene>
<dbReference type="EC" id="2.3.1.-"/>
<dbReference type="EMBL" id="Z99571">
    <property type="status" value="NOT_ANNOTATED_CDS"/>
    <property type="molecule type" value="Genomic_DNA"/>
</dbReference>
<dbReference type="EMBL" id="BC043215">
    <property type="protein sequence ID" value="AAH43215.2"/>
    <property type="molecule type" value="mRNA"/>
</dbReference>
<dbReference type="EMBL" id="BC126401">
    <property type="protein sequence ID" value="AAI26402.1"/>
    <property type="molecule type" value="mRNA"/>
</dbReference>
<dbReference type="CCDS" id="CCDS35343.2">
    <molecule id="Q86VE3-2"/>
</dbReference>
<dbReference type="CCDS" id="CCDS94638.1">
    <molecule id="Q86VE3-1"/>
</dbReference>
<dbReference type="RefSeq" id="NP_001012998.2">
    <molecule id="Q86VE3-2"/>
    <property type="nucleotide sequence ID" value="NM_001012980.2"/>
</dbReference>
<dbReference type="RefSeq" id="NP_001354786.1">
    <molecule id="Q86VE3-1"/>
    <property type="nucleotide sequence ID" value="NM_001367857.2"/>
</dbReference>
<dbReference type="RefSeq" id="XP_047298037.1">
    <molecule id="Q86VE3-1"/>
    <property type="nucleotide sequence ID" value="XM_047442081.1"/>
</dbReference>
<dbReference type="RefSeq" id="XP_054182964.1">
    <molecule id="Q86VE3-1"/>
    <property type="nucleotide sequence ID" value="XM_054326989.1"/>
</dbReference>
<dbReference type="SMR" id="Q86VE3"/>
<dbReference type="BioGRID" id="131076">
    <property type="interactions" value="2"/>
</dbReference>
<dbReference type="FunCoup" id="Q86VE3">
    <property type="interactions" value="422"/>
</dbReference>
<dbReference type="STRING" id="9606.ENSP00000425421"/>
<dbReference type="iPTMnet" id="Q86VE3"/>
<dbReference type="PhosphoSitePlus" id="Q86VE3"/>
<dbReference type="BioMuta" id="SATL1"/>
<dbReference type="DMDM" id="143583359"/>
<dbReference type="jPOST" id="Q86VE3"/>
<dbReference type="MassIVE" id="Q86VE3"/>
<dbReference type="PaxDb" id="9606-ENSP00000425421"/>
<dbReference type="PeptideAtlas" id="Q86VE3"/>
<dbReference type="ProteomicsDB" id="69991">
    <molecule id="Q86VE3-1"/>
</dbReference>
<dbReference type="Antibodypedia" id="54033">
    <property type="antibodies" value="59 antibodies from 13 providers"/>
</dbReference>
<dbReference type="DNASU" id="340562"/>
<dbReference type="Ensembl" id="ENST00000509231.1">
    <molecule id="Q86VE3-2"/>
    <property type="protein sequence ID" value="ENSP00000425421.1"/>
    <property type="gene ID" value="ENSG00000184788.14"/>
</dbReference>
<dbReference type="Ensembl" id="ENST00000644105.2">
    <molecule id="Q86VE3-1"/>
    <property type="protein sequence ID" value="ENSP00000494345.1"/>
    <property type="gene ID" value="ENSG00000184788.14"/>
</dbReference>
<dbReference type="Ensembl" id="ENST00000646118.1">
    <molecule id="Q86VE3-1"/>
    <property type="protein sequence ID" value="ENSP00000493598.1"/>
    <property type="gene ID" value="ENSG00000184788.14"/>
</dbReference>
<dbReference type="GeneID" id="340562"/>
<dbReference type="KEGG" id="hsa:340562"/>
<dbReference type="MANE-Select" id="ENST00000644105.2">
    <property type="protein sequence ID" value="ENSP00000494345.1"/>
    <property type="RefSeq nucleotide sequence ID" value="NM_001367857.2"/>
    <property type="RefSeq protein sequence ID" value="NP_001354786.1"/>
</dbReference>
<dbReference type="UCSC" id="uc004een.4">
    <molecule id="Q86VE3-1"/>
    <property type="organism name" value="human"/>
</dbReference>
<dbReference type="AGR" id="HGNC:27992"/>
<dbReference type="CTD" id="340562"/>
<dbReference type="GeneCards" id="SATL1"/>
<dbReference type="HGNC" id="HGNC:27992">
    <property type="gene designation" value="SATL1"/>
</dbReference>
<dbReference type="HPA" id="ENSG00000184788">
    <property type="expression patterns" value="Not detected"/>
</dbReference>
<dbReference type="MalaCards" id="SATL1"/>
<dbReference type="MIM" id="301129">
    <property type="type" value="gene"/>
</dbReference>
<dbReference type="neXtProt" id="NX_Q86VE3"/>
<dbReference type="OpenTargets" id="ENSG00000184788"/>
<dbReference type="PharmGKB" id="PA134969637"/>
<dbReference type="VEuPathDB" id="HostDB:ENSG00000184788"/>
<dbReference type="eggNOG" id="KOG3216">
    <property type="taxonomic scope" value="Eukaryota"/>
</dbReference>
<dbReference type="GeneTree" id="ENSGT00950000183121"/>
<dbReference type="HOGENOM" id="CLU_052128_1_0_1"/>
<dbReference type="InParanoid" id="Q86VE3"/>
<dbReference type="OMA" id="GHPGMWQ"/>
<dbReference type="OrthoDB" id="7305308at2759"/>
<dbReference type="PAN-GO" id="Q86VE3">
    <property type="GO annotations" value="1 GO annotation based on evolutionary models"/>
</dbReference>
<dbReference type="PhylomeDB" id="Q86VE3"/>
<dbReference type="TreeFam" id="TF319736"/>
<dbReference type="PathwayCommons" id="Q86VE3"/>
<dbReference type="BioGRID-ORCS" id="340562">
    <property type="hits" value="10 hits in 766 CRISPR screens"/>
</dbReference>
<dbReference type="ChiTaRS" id="SATL1">
    <property type="organism name" value="human"/>
</dbReference>
<dbReference type="GenomeRNAi" id="340562"/>
<dbReference type="Pharos" id="Q86VE3">
    <property type="development level" value="Tdark"/>
</dbReference>
<dbReference type="PRO" id="PR:Q86VE3"/>
<dbReference type="Proteomes" id="UP000005640">
    <property type="component" value="Chromosome X"/>
</dbReference>
<dbReference type="RNAct" id="Q86VE3">
    <property type="molecule type" value="protein"/>
</dbReference>
<dbReference type="Bgee" id="ENSG00000184788">
    <property type="expression patterns" value="Expressed in male germ line stem cell (sensu Vertebrata) in testis and 35 other cell types or tissues"/>
</dbReference>
<dbReference type="ExpressionAtlas" id="Q86VE3">
    <property type="expression patterns" value="baseline and differential"/>
</dbReference>
<dbReference type="GO" id="GO:0016747">
    <property type="term" value="F:acyltransferase activity, transferring groups other than amino-acyl groups"/>
    <property type="evidence" value="ECO:0007669"/>
    <property type="project" value="InterPro"/>
</dbReference>
<dbReference type="GO" id="GO:0019809">
    <property type="term" value="F:spermidine binding"/>
    <property type="evidence" value="ECO:0000318"/>
    <property type="project" value="GO_Central"/>
</dbReference>
<dbReference type="GO" id="GO:0032918">
    <property type="term" value="P:spermidine acetylation"/>
    <property type="evidence" value="ECO:0000318"/>
    <property type="project" value="GO_Central"/>
</dbReference>
<dbReference type="CDD" id="cd04301">
    <property type="entry name" value="NAT_SF"/>
    <property type="match status" value="1"/>
</dbReference>
<dbReference type="FunFam" id="3.40.630.30:FF:000011">
    <property type="entry name" value="Diamine acetyltransferase 1"/>
    <property type="match status" value="1"/>
</dbReference>
<dbReference type="Gene3D" id="3.40.630.30">
    <property type="match status" value="1"/>
</dbReference>
<dbReference type="InterPro" id="IPR016181">
    <property type="entry name" value="Acyl_CoA_acyltransferase"/>
</dbReference>
<dbReference type="InterPro" id="IPR051016">
    <property type="entry name" value="Diverse_Substrate_AcTransf"/>
</dbReference>
<dbReference type="InterPro" id="IPR000182">
    <property type="entry name" value="GNAT_dom"/>
</dbReference>
<dbReference type="PANTHER" id="PTHR10545">
    <property type="entry name" value="DIAMINE N-ACETYLTRANSFERASE"/>
    <property type="match status" value="1"/>
</dbReference>
<dbReference type="PANTHER" id="PTHR10545:SF63">
    <property type="entry name" value="SPERMIDINE_SPERMINE N(1)-ACETYLTRANSFERASE-LIKE PROTEIN 1"/>
    <property type="match status" value="1"/>
</dbReference>
<dbReference type="Pfam" id="PF00583">
    <property type="entry name" value="Acetyltransf_1"/>
    <property type="match status" value="1"/>
</dbReference>
<dbReference type="SUPFAM" id="SSF55729">
    <property type="entry name" value="Acyl-CoA N-acyltransferases (Nat)"/>
    <property type="match status" value="1"/>
</dbReference>
<dbReference type="PROSITE" id="PS51186">
    <property type="entry name" value="GNAT"/>
    <property type="match status" value="1"/>
</dbReference>
<organism>
    <name type="scientific">Homo sapiens</name>
    <name type="common">Human</name>
    <dbReference type="NCBI Taxonomy" id="9606"/>
    <lineage>
        <taxon>Eukaryota</taxon>
        <taxon>Metazoa</taxon>
        <taxon>Chordata</taxon>
        <taxon>Craniata</taxon>
        <taxon>Vertebrata</taxon>
        <taxon>Euteleostomi</taxon>
        <taxon>Mammalia</taxon>
        <taxon>Eutheria</taxon>
        <taxon>Euarchontoglires</taxon>
        <taxon>Primates</taxon>
        <taxon>Haplorrhini</taxon>
        <taxon>Catarrhini</taxon>
        <taxon>Hominidae</taxon>
        <taxon>Homo</taxon>
    </lineage>
</organism>
<reference key="1">
    <citation type="journal article" date="2005" name="Nature">
        <title>The DNA sequence of the human X chromosome.</title>
        <authorList>
            <person name="Ross M.T."/>
            <person name="Grafham D.V."/>
            <person name="Coffey A.J."/>
            <person name="Scherer S."/>
            <person name="McLay K."/>
            <person name="Muzny D."/>
            <person name="Platzer M."/>
            <person name="Howell G.R."/>
            <person name="Burrows C."/>
            <person name="Bird C.P."/>
            <person name="Frankish A."/>
            <person name="Lovell F.L."/>
            <person name="Howe K.L."/>
            <person name="Ashurst J.L."/>
            <person name="Fulton R.S."/>
            <person name="Sudbrak R."/>
            <person name="Wen G."/>
            <person name="Jones M.C."/>
            <person name="Hurles M.E."/>
            <person name="Andrews T.D."/>
            <person name="Scott C.E."/>
            <person name="Searle S."/>
            <person name="Ramser J."/>
            <person name="Whittaker A."/>
            <person name="Deadman R."/>
            <person name="Carter N.P."/>
            <person name="Hunt S.E."/>
            <person name="Chen R."/>
            <person name="Cree A."/>
            <person name="Gunaratne P."/>
            <person name="Havlak P."/>
            <person name="Hodgson A."/>
            <person name="Metzker M.L."/>
            <person name="Richards S."/>
            <person name="Scott G."/>
            <person name="Steffen D."/>
            <person name="Sodergren E."/>
            <person name="Wheeler D.A."/>
            <person name="Worley K.C."/>
            <person name="Ainscough R."/>
            <person name="Ambrose K.D."/>
            <person name="Ansari-Lari M.A."/>
            <person name="Aradhya S."/>
            <person name="Ashwell R.I."/>
            <person name="Babbage A.K."/>
            <person name="Bagguley C.L."/>
            <person name="Ballabio A."/>
            <person name="Banerjee R."/>
            <person name="Barker G.E."/>
            <person name="Barlow K.F."/>
            <person name="Barrett I.P."/>
            <person name="Bates K.N."/>
            <person name="Beare D.M."/>
            <person name="Beasley H."/>
            <person name="Beasley O."/>
            <person name="Beck A."/>
            <person name="Bethel G."/>
            <person name="Blechschmidt K."/>
            <person name="Brady N."/>
            <person name="Bray-Allen S."/>
            <person name="Bridgeman A.M."/>
            <person name="Brown A.J."/>
            <person name="Brown M.J."/>
            <person name="Bonnin D."/>
            <person name="Bruford E.A."/>
            <person name="Buhay C."/>
            <person name="Burch P."/>
            <person name="Burford D."/>
            <person name="Burgess J."/>
            <person name="Burrill W."/>
            <person name="Burton J."/>
            <person name="Bye J.M."/>
            <person name="Carder C."/>
            <person name="Carrel L."/>
            <person name="Chako J."/>
            <person name="Chapman J.C."/>
            <person name="Chavez D."/>
            <person name="Chen E."/>
            <person name="Chen G."/>
            <person name="Chen Y."/>
            <person name="Chen Z."/>
            <person name="Chinault C."/>
            <person name="Ciccodicola A."/>
            <person name="Clark S.Y."/>
            <person name="Clarke G."/>
            <person name="Clee C.M."/>
            <person name="Clegg S."/>
            <person name="Clerc-Blankenburg K."/>
            <person name="Clifford K."/>
            <person name="Cobley V."/>
            <person name="Cole C.G."/>
            <person name="Conquer J.S."/>
            <person name="Corby N."/>
            <person name="Connor R.E."/>
            <person name="David R."/>
            <person name="Davies J."/>
            <person name="Davis C."/>
            <person name="Davis J."/>
            <person name="Delgado O."/>
            <person name="Deshazo D."/>
            <person name="Dhami P."/>
            <person name="Ding Y."/>
            <person name="Dinh H."/>
            <person name="Dodsworth S."/>
            <person name="Draper H."/>
            <person name="Dugan-Rocha S."/>
            <person name="Dunham A."/>
            <person name="Dunn M."/>
            <person name="Durbin K.J."/>
            <person name="Dutta I."/>
            <person name="Eades T."/>
            <person name="Ellwood M."/>
            <person name="Emery-Cohen A."/>
            <person name="Errington H."/>
            <person name="Evans K.L."/>
            <person name="Faulkner L."/>
            <person name="Francis F."/>
            <person name="Frankland J."/>
            <person name="Fraser A.E."/>
            <person name="Galgoczy P."/>
            <person name="Gilbert J."/>
            <person name="Gill R."/>
            <person name="Gloeckner G."/>
            <person name="Gregory S.G."/>
            <person name="Gribble S."/>
            <person name="Griffiths C."/>
            <person name="Grocock R."/>
            <person name="Gu Y."/>
            <person name="Gwilliam R."/>
            <person name="Hamilton C."/>
            <person name="Hart E.A."/>
            <person name="Hawes A."/>
            <person name="Heath P.D."/>
            <person name="Heitmann K."/>
            <person name="Hennig S."/>
            <person name="Hernandez J."/>
            <person name="Hinzmann B."/>
            <person name="Ho S."/>
            <person name="Hoffs M."/>
            <person name="Howden P.J."/>
            <person name="Huckle E.J."/>
            <person name="Hume J."/>
            <person name="Hunt P.J."/>
            <person name="Hunt A.R."/>
            <person name="Isherwood J."/>
            <person name="Jacob L."/>
            <person name="Johnson D."/>
            <person name="Jones S."/>
            <person name="de Jong P.J."/>
            <person name="Joseph S.S."/>
            <person name="Keenan S."/>
            <person name="Kelly S."/>
            <person name="Kershaw J.K."/>
            <person name="Khan Z."/>
            <person name="Kioschis P."/>
            <person name="Klages S."/>
            <person name="Knights A.J."/>
            <person name="Kosiura A."/>
            <person name="Kovar-Smith C."/>
            <person name="Laird G.K."/>
            <person name="Langford C."/>
            <person name="Lawlor S."/>
            <person name="Leversha M."/>
            <person name="Lewis L."/>
            <person name="Liu W."/>
            <person name="Lloyd C."/>
            <person name="Lloyd D.M."/>
            <person name="Loulseged H."/>
            <person name="Loveland J.E."/>
            <person name="Lovell J.D."/>
            <person name="Lozado R."/>
            <person name="Lu J."/>
            <person name="Lyne R."/>
            <person name="Ma J."/>
            <person name="Maheshwari M."/>
            <person name="Matthews L.H."/>
            <person name="McDowall J."/>
            <person name="McLaren S."/>
            <person name="McMurray A."/>
            <person name="Meidl P."/>
            <person name="Meitinger T."/>
            <person name="Milne S."/>
            <person name="Miner G."/>
            <person name="Mistry S.L."/>
            <person name="Morgan M."/>
            <person name="Morris S."/>
            <person name="Mueller I."/>
            <person name="Mullikin J.C."/>
            <person name="Nguyen N."/>
            <person name="Nordsiek G."/>
            <person name="Nyakatura G."/>
            <person name="O'dell C.N."/>
            <person name="Okwuonu G."/>
            <person name="Palmer S."/>
            <person name="Pandian R."/>
            <person name="Parker D."/>
            <person name="Parrish J."/>
            <person name="Pasternak S."/>
            <person name="Patel D."/>
            <person name="Pearce A.V."/>
            <person name="Pearson D.M."/>
            <person name="Pelan S.E."/>
            <person name="Perez L."/>
            <person name="Porter K.M."/>
            <person name="Ramsey Y."/>
            <person name="Reichwald K."/>
            <person name="Rhodes S."/>
            <person name="Ridler K.A."/>
            <person name="Schlessinger D."/>
            <person name="Schueler M.G."/>
            <person name="Sehra H.K."/>
            <person name="Shaw-Smith C."/>
            <person name="Shen H."/>
            <person name="Sheridan E.M."/>
            <person name="Shownkeen R."/>
            <person name="Skuce C.D."/>
            <person name="Smith M.L."/>
            <person name="Sotheran E.C."/>
            <person name="Steingruber H.E."/>
            <person name="Steward C.A."/>
            <person name="Storey R."/>
            <person name="Swann R.M."/>
            <person name="Swarbreck D."/>
            <person name="Tabor P.E."/>
            <person name="Taudien S."/>
            <person name="Taylor T."/>
            <person name="Teague B."/>
            <person name="Thomas K."/>
            <person name="Thorpe A."/>
            <person name="Timms K."/>
            <person name="Tracey A."/>
            <person name="Trevanion S."/>
            <person name="Tromans A.C."/>
            <person name="d'Urso M."/>
            <person name="Verduzco D."/>
            <person name="Villasana D."/>
            <person name="Waldron L."/>
            <person name="Wall M."/>
            <person name="Wang Q."/>
            <person name="Warren J."/>
            <person name="Warry G.L."/>
            <person name="Wei X."/>
            <person name="West A."/>
            <person name="Whitehead S.L."/>
            <person name="Whiteley M.N."/>
            <person name="Wilkinson J.E."/>
            <person name="Willey D.L."/>
            <person name="Williams G."/>
            <person name="Williams L."/>
            <person name="Williamson A."/>
            <person name="Williamson H."/>
            <person name="Wilming L."/>
            <person name="Woodmansey R.L."/>
            <person name="Wray P.W."/>
            <person name="Yen J."/>
            <person name="Zhang J."/>
            <person name="Zhou J."/>
            <person name="Zoghbi H."/>
            <person name="Zorilla S."/>
            <person name="Buck D."/>
            <person name="Reinhardt R."/>
            <person name="Poustka A."/>
            <person name="Rosenthal A."/>
            <person name="Lehrach H."/>
            <person name="Meindl A."/>
            <person name="Minx P.J."/>
            <person name="Hillier L.W."/>
            <person name="Willard H.F."/>
            <person name="Wilson R.K."/>
            <person name="Waterston R.H."/>
            <person name="Rice C.M."/>
            <person name="Vaudin M."/>
            <person name="Coulson A."/>
            <person name="Nelson D.L."/>
            <person name="Weinstock G."/>
            <person name="Sulston J.E."/>
            <person name="Durbin R.M."/>
            <person name="Hubbard T."/>
            <person name="Gibbs R.A."/>
            <person name="Beck S."/>
            <person name="Rogers J."/>
            <person name="Bentley D.R."/>
        </authorList>
    </citation>
    <scope>NUCLEOTIDE SEQUENCE [LARGE SCALE GENOMIC DNA]</scope>
</reference>
<reference key="2">
    <citation type="journal article" date="2004" name="Genome Res.">
        <title>The status, quality, and expansion of the NIH full-length cDNA project: the Mammalian Gene Collection (MGC).</title>
        <authorList>
            <consortium name="The MGC Project Team"/>
        </authorList>
    </citation>
    <scope>NUCLEOTIDE SEQUENCE [LARGE SCALE MRNA] OF 176-695 (ISOFORM 2)</scope>
    <scope>VARIANT ARG-279</scope>
    <source>
        <tissue>Testis</tissue>
    </source>
</reference>
<keyword id="KW-0012">Acyltransferase</keyword>
<keyword id="KW-0025">Alternative splicing</keyword>
<keyword id="KW-1267">Proteomics identification</keyword>
<keyword id="KW-1185">Reference proteome</keyword>
<keyword id="KW-0808">Transferase</keyword>
<sequence length="695" mass="75812">MNQSGTNQSSLSDSNQAGINQPSTNSLGMNQMDMNQGSASLYEMNQVDMKQPSMSQAGMRQSGTNLPDINQPDMKQPDTWQLGRSQPGMLQQELSQLVLSKAGISQPDPSQPGPSQSGPSQSRMRQIGTNQSGMSQPVMQQLDSQSGGSQPSMRQVGTSQLGTSQIGMSQPGTWQTGLSQPVLRQPNMSPPGMWQPGVQQPGISQQVPSHPDMSQPGMSQQVPSQPGIRQPDTSQSCKNQTDMSQPDANQSSLSDSNQTGIIQPSPSLLGMNQMDMNQWSASLYEMNQVDMKQPSMSQAGMRQSGTNLPDINQPGMKQPGTWQLGRSQPGMWPQSLSELVLSEASISQPGPPQRAPSQSGPRQSSTSQAGTNQSGISQPVMWQLDMRQSGGSQPSMRQVGTSQSGTSQIGMSQPGTWQTGLSQPVPRQPNKSPPGMWQRGMWQPGMSQQVPSQLGMRQPGTSQSSKNQTGMSHPGRGQPGIWEPGPSQPGLSQQDLNQLVLSQPGLSQPGRSQPSVSQMGMRQTSMDYFQIRHAEAGDCPEILRLIKELAACENMLDAMELTAADLLRDGFGDNPLFYCLIAEVNDQQKPSGKLTVGFAMYYFTYDSWTGKVLYLEDFYVTQAYQGLGIGAEMLKRLSQIAITTQCNCMHFLVVIWNQASINYYTSRGALDLSSEEGWHLFRFNREELLDMAWEE</sequence>
<comment type="alternative products">
    <event type="alternative splicing"/>
    <isoform>
        <id>Q86VE3-1</id>
        <name>1</name>
        <sequence type="displayed"/>
    </isoform>
    <isoform>
        <id>Q86VE3-2</id>
        <name>2</name>
        <sequence type="described" ref="VSP_024253 VSP_024254"/>
    </isoform>
</comment>
<comment type="similarity">
    <text evidence="6">Belongs to the acetyltransferase family.</text>
</comment>
<protein>
    <recommendedName>
        <fullName>Spermidine/spermine N(1)-acetyltransferase-like protein 1</fullName>
        <ecNumber>2.3.1.-</ecNumber>
    </recommendedName>
</protein>